<comment type="catalytic activity">
    <reaction evidence="1">
        <text>urea + 2 H2O + H(+) = hydrogencarbonate + 2 NH4(+)</text>
        <dbReference type="Rhea" id="RHEA:20557"/>
        <dbReference type="ChEBI" id="CHEBI:15377"/>
        <dbReference type="ChEBI" id="CHEBI:15378"/>
        <dbReference type="ChEBI" id="CHEBI:16199"/>
        <dbReference type="ChEBI" id="CHEBI:17544"/>
        <dbReference type="ChEBI" id="CHEBI:28938"/>
        <dbReference type="EC" id="3.5.1.5"/>
    </reaction>
</comment>
<comment type="pathway">
    <text evidence="1">Nitrogen metabolism; urea degradation; CO(2) and NH(3) from urea (urease route): step 1/1.</text>
</comment>
<comment type="subunit">
    <text evidence="1">Heterotrimer of UreA (gamma), UreB (beta) and UreC (alpha) subunits. Three heterotrimers associate to form the active enzyme.</text>
</comment>
<comment type="subcellular location">
    <subcellularLocation>
        <location evidence="1">Cytoplasm</location>
    </subcellularLocation>
</comment>
<comment type="similarity">
    <text evidence="1">Belongs to the urease beta subunit family.</text>
</comment>
<evidence type="ECO:0000255" key="1">
    <source>
        <dbReference type="HAMAP-Rule" id="MF_01954"/>
    </source>
</evidence>
<feature type="chain" id="PRO_0000234267" description="Urease subunit beta">
    <location>
        <begin position="1"/>
        <end position="101"/>
    </location>
</feature>
<accession>Q473R0</accession>
<name>URE2_CUPPJ</name>
<protein>
    <recommendedName>
        <fullName evidence="1">Urease subunit beta</fullName>
        <ecNumber evidence="1">3.5.1.5</ecNumber>
    </recommendedName>
    <alternativeName>
        <fullName evidence="1">Urea amidohydrolase subunit beta</fullName>
    </alternativeName>
</protein>
<dbReference type="EC" id="3.5.1.5" evidence="1"/>
<dbReference type="EMBL" id="CP000090">
    <property type="protein sequence ID" value="AAZ60373.1"/>
    <property type="molecule type" value="Genomic_DNA"/>
</dbReference>
<dbReference type="SMR" id="Q473R0"/>
<dbReference type="STRING" id="264198.Reut_A0994"/>
<dbReference type="KEGG" id="reu:Reut_A0994"/>
<dbReference type="eggNOG" id="COG0832">
    <property type="taxonomic scope" value="Bacteria"/>
</dbReference>
<dbReference type="HOGENOM" id="CLU_129707_1_1_4"/>
<dbReference type="OrthoDB" id="9797217at2"/>
<dbReference type="UniPathway" id="UPA00258">
    <property type="reaction ID" value="UER00370"/>
</dbReference>
<dbReference type="GO" id="GO:0035550">
    <property type="term" value="C:urease complex"/>
    <property type="evidence" value="ECO:0007669"/>
    <property type="project" value="InterPro"/>
</dbReference>
<dbReference type="GO" id="GO:0009039">
    <property type="term" value="F:urease activity"/>
    <property type="evidence" value="ECO:0007669"/>
    <property type="project" value="UniProtKB-UniRule"/>
</dbReference>
<dbReference type="GO" id="GO:0043419">
    <property type="term" value="P:urea catabolic process"/>
    <property type="evidence" value="ECO:0007669"/>
    <property type="project" value="UniProtKB-UniRule"/>
</dbReference>
<dbReference type="CDD" id="cd00407">
    <property type="entry name" value="Urease_beta"/>
    <property type="match status" value="1"/>
</dbReference>
<dbReference type="FunFam" id="2.10.150.10:FF:000001">
    <property type="entry name" value="Urease subunit beta"/>
    <property type="match status" value="1"/>
</dbReference>
<dbReference type="Gene3D" id="2.10.150.10">
    <property type="entry name" value="Urease, beta subunit"/>
    <property type="match status" value="1"/>
</dbReference>
<dbReference type="HAMAP" id="MF_01954">
    <property type="entry name" value="Urease_beta"/>
    <property type="match status" value="1"/>
</dbReference>
<dbReference type="InterPro" id="IPR002019">
    <property type="entry name" value="Urease_beta-like"/>
</dbReference>
<dbReference type="InterPro" id="IPR036461">
    <property type="entry name" value="Urease_betasu_sf"/>
</dbReference>
<dbReference type="InterPro" id="IPR050069">
    <property type="entry name" value="Urease_subunit"/>
</dbReference>
<dbReference type="NCBIfam" id="NF009682">
    <property type="entry name" value="PRK13203.1"/>
    <property type="match status" value="1"/>
</dbReference>
<dbReference type="NCBIfam" id="TIGR00192">
    <property type="entry name" value="urease_beta"/>
    <property type="match status" value="1"/>
</dbReference>
<dbReference type="PANTHER" id="PTHR33569">
    <property type="entry name" value="UREASE"/>
    <property type="match status" value="1"/>
</dbReference>
<dbReference type="PANTHER" id="PTHR33569:SF1">
    <property type="entry name" value="UREASE"/>
    <property type="match status" value="1"/>
</dbReference>
<dbReference type="Pfam" id="PF00699">
    <property type="entry name" value="Urease_beta"/>
    <property type="match status" value="1"/>
</dbReference>
<dbReference type="SUPFAM" id="SSF51278">
    <property type="entry name" value="Urease, beta-subunit"/>
    <property type="match status" value="1"/>
</dbReference>
<sequence length="101" mass="10851">MIPGELMAADGEIELNAGRHTASVTVANTGDRPIQVGSHFHFYETNAALSFDREATRGFRLNIAAGTAVRFEPGQTRTVELVALDGDRIVYGFNGKIMGAL</sequence>
<keyword id="KW-0963">Cytoplasm</keyword>
<keyword id="KW-0378">Hydrolase</keyword>
<reference key="1">
    <citation type="journal article" date="2010" name="PLoS ONE">
        <title>The complete multipartite genome sequence of Cupriavidus necator JMP134, a versatile pollutant degrader.</title>
        <authorList>
            <person name="Lykidis A."/>
            <person name="Perez-Pantoja D."/>
            <person name="Ledger T."/>
            <person name="Mavromatis K."/>
            <person name="Anderson I.J."/>
            <person name="Ivanova N.N."/>
            <person name="Hooper S.D."/>
            <person name="Lapidus A."/>
            <person name="Lucas S."/>
            <person name="Gonzalez B."/>
            <person name="Kyrpides N.C."/>
        </authorList>
    </citation>
    <scope>NUCLEOTIDE SEQUENCE [LARGE SCALE GENOMIC DNA]</scope>
    <source>
        <strain>JMP134 / LMG 1197</strain>
    </source>
</reference>
<organism>
    <name type="scientific">Cupriavidus pinatubonensis (strain JMP 134 / LMG 1197)</name>
    <name type="common">Cupriavidus necator (strain JMP 134)</name>
    <dbReference type="NCBI Taxonomy" id="264198"/>
    <lineage>
        <taxon>Bacteria</taxon>
        <taxon>Pseudomonadati</taxon>
        <taxon>Pseudomonadota</taxon>
        <taxon>Betaproteobacteria</taxon>
        <taxon>Burkholderiales</taxon>
        <taxon>Burkholderiaceae</taxon>
        <taxon>Cupriavidus</taxon>
    </lineage>
</organism>
<gene>
    <name evidence="1" type="primary">ureB</name>
    <name type="ordered locus">Reut_A0994</name>
</gene>
<proteinExistence type="inferred from homology"/>